<sequence length="342" mass="37606">MLFWGTPSYAVPTLDALNDSGYEIVGVVSQPDRRRGRGNQQMASPVKQRAMDQGLRLFTPERIRDEGDIQAELKSLKADISVVVAFGQLLPSTVLNQPPLGCWNGHASLLPRWRGAGPIQWSLLSGDSVTGVGIMAMEEGLDTGPVLVQERVAIGLLENANQLSNRLSSITAKLFLESMPRIAAAGPGIESERWKQLEVIKQEEIEGDPTYARMLSKKDHILDWNQSAMDLHRRVMGLYPNAFSSWNNKRLKVQATEPLDEELKSKLSEEVRPLLGRWQDGEHEPGKILACESDLGLVVSTKTCPLLIRQGQLEGKSKALGEVLIQQLQATVGQGLGVGFNI</sequence>
<dbReference type="EC" id="2.1.2.9" evidence="1"/>
<dbReference type="EMBL" id="BX548175">
    <property type="protein sequence ID" value="CAE20947.1"/>
    <property type="molecule type" value="Genomic_DNA"/>
</dbReference>
<dbReference type="SMR" id="Q7V7H4"/>
<dbReference type="KEGG" id="pmt:PMT_0772"/>
<dbReference type="eggNOG" id="COG0223">
    <property type="taxonomic scope" value="Bacteria"/>
</dbReference>
<dbReference type="HOGENOM" id="CLU_033347_1_1_3"/>
<dbReference type="OrthoDB" id="9802815at2"/>
<dbReference type="Proteomes" id="UP000001423">
    <property type="component" value="Chromosome"/>
</dbReference>
<dbReference type="GO" id="GO:0005829">
    <property type="term" value="C:cytosol"/>
    <property type="evidence" value="ECO:0007669"/>
    <property type="project" value="TreeGrafter"/>
</dbReference>
<dbReference type="GO" id="GO:0004479">
    <property type="term" value="F:methionyl-tRNA formyltransferase activity"/>
    <property type="evidence" value="ECO:0007669"/>
    <property type="project" value="UniProtKB-UniRule"/>
</dbReference>
<dbReference type="CDD" id="cd08646">
    <property type="entry name" value="FMT_core_Met-tRNA-FMT_N"/>
    <property type="match status" value="1"/>
</dbReference>
<dbReference type="CDD" id="cd08704">
    <property type="entry name" value="Met_tRNA_FMT_C"/>
    <property type="match status" value="1"/>
</dbReference>
<dbReference type="Gene3D" id="3.40.50.12230">
    <property type="match status" value="1"/>
</dbReference>
<dbReference type="HAMAP" id="MF_00182">
    <property type="entry name" value="Formyl_trans"/>
    <property type="match status" value="1"/>
</dbReference>
<dbReference type="InterPro" id="IPR005794">
    <property type="entry name" value="Fmt"/>
</dbReference>
<dbReference type="InterPro" id="IPR005793">
    <property type="entry name" value="Formyl_trans_C"/>
</dbReference>
<dbReference type="InterPro" id="IPR002376">
    <property type="entry name" value="Formyl_transf_N"/>
</dbReference>
<dbReference type="InterPro" id="IPR036477">
    <property type="entry name" value="Formyl_transf_N_sf"/>
</dbReference>
<dbReference type="InterPro" id="IPR011034">
    <property type="entry name" value="Formyl_transferase-like_C_sf"/>
</dbReference>
<dbReference type="InterPro" id="IPR044135">
    <property type="entry name" value="Met-tRNA-FMT_C"/>
</dbReference>
<dbReference type="InterPro" id="IPR041711">
    <property type="entry name" value="Met-tRNA-FMT_N"/>
</dbReference>
<dbReference type="NCBIfam" id="TIGR00460">
    <property type="entry name" value="fmt"/>
    <property type="match status" value="1"/>
</dbReference>
<dbReference type="PANTHER" id="PTHR11138">
    <property type="entry name" value="METHIONYL-TRNA FORMYLTRANSFERASE"/>
    <property type="match status" value="1"/>
</dbReference>
<dbReference type="PANTHER" id="PTHR11138:SF5">
    <property type="entry name" value="METHIONYL-TRNA FORMYLTRANSFERASE, MITOCHONDRIAL"/>
    <property type="match status" value="1"/>
</dbReference>
<dbReference type="Pfam" id="PF02911">
    <property type="entry name" value="Formyl_trans_C"/>
    <property type="match status" value="1"/>
</dbReference>
<dbReference type="Pfam" id="PF00551">
    <property type="entry name" value="Formyl_trans_N"/>
    <property type="match status" value="1"/>
</dbReference>
<dbReference type="SUPFAM" id="SSF50486">
    <property type="entry name" value="FMT C-terminal domain-like"/>
    <property type="match status" value="1"/>
</dbReference>
<dbReference type="SUPFAM" id="SSF53328">
    <property type="entry name" value="Formyltransferase"/>
    <property type="match status" value="1"/>
</dbReference>
<gene>
    <name evidence="1" type="primary">fmt</name>
    <name type="ordered locus">PMT_0772</name>
</gene>
<evidence type="ECO:0000255" key="1">
    <source>
        <dbReference type="HAMAP-Rule" id="MF_00182"/>
    </source>
</evidence>
<accession>Q7V7H4</accession>
<name>FMT_PROMM</name>
<comment type="function">
    <text evidence="1">Attaches a formyl group to the free amino group of methionyl-tRNA(fMet). The formyl group appears to play a dual role in the initiator identity of N-formylmethionyl-tRNA by promoting its recognition by IF2 and preventing the misappropriation of this tRNA by the elongation apparatus.</text>
</comment>
<comment type="catalytic activity">
    <reaction evidence="1">
        <text>L-methionyl-tRNA(fMet) + (6R)-10-formyltetrahydrofolate = N-formyl-L-methionyl-tRNA(fMet) + (6S)-5,6,7,8-tetrahydrofolate + H(+)</text>
        <dbReference type="Rhea" id="RHEA:24380"/>
        <dbReference type="Rhea" id="RHEA-COMP:9952"/>
        <dbReference type="Rhea" id="RHEA-COMP:9953"/>
        <dbReference type="ChEBI" id="CHEBI:15378"/>
        <dbReference type="ChEBI" id="CHEBI:57453"/>
        <dbReference type="ChEBI" id="CHEBI:78530"/>
        <dbReference type="ChEBI" id="CHEBI:78844"/>
        <dbReference type="ChEBI" id="CHEBI:195366"/>
        <dbReference type="EC" id="2.1.2.9"/>
    </reaction>
</comment>
<comment type="similarity">
    <text evidence="1">Belongs to the Fmt family.</text>
</comment>
<feature type="chain" id="PRO_0000083015" description="Methionyl-tRNA formyltransferase">
    <location>
        <begin position="1"/>
        <end position="342"/>
    </location>
</feature>
<feature type="binding site" evidence="1">
    <location>
        <begin position="108"/>
        <end position="111"/>
    </location>
    <ligand>
        <name>(6S)-5,6,7,8-tetrahydrofolate</name>
        <dbReference type="ChEBI" id="CHEBI:57453"/>
    </ligand>
</feature>
<organism>
    <name type="scientific">Prochlorococcus marinus (strain MIT 9313)</name>
    <dbReference type="NCBI Taxonomy" id="74547"/>
    <lineage>
        <taxon>Bacteria</taxon>
        <taxon>Bacillati</taxon>
        <taxon>Cyanobacteriota</taxon>
        <taxon>Cyanophyceae</taxon>
        <taxon>Synechococcales</taxon>
        <taxon>Prochlorococcaceae</taxon>
        <taxon>Prochlorococcus</taxon>
    </lineage>
</organism>
<keyword id="KW-0648">Protein biosynthesis</keyword>
<keyword id="KW-1185">Reference proteome</keyword>
<keyword id="KW-0808">Transferase</keyword>
<proteinExistence type="inferred from homology"/>
<protein>
    <recommendedName>
        <fullName evidence="1">Methionyl-tRNA formyltransferase</fullName>
        <ecNumber evidence="1">2.1.2.9</ecNumber>
    </recommendedName>
</protein>
<reference key="1">
    <citation type="journal article" date="2003" name="Nature">
        <title>Genome divergence in two Prochlorococcus ecotypes reflects oceanic niche differentiation.</title>
        <authorList>
            <person name="Rocap G."/>
            <person name="Larimer F.W."/>
            <person name="Lamerdin J.E."/>
            <person name="Malfatti S."/>
            <person name="Chain P."/>
            <person name="Ahlgren N.A."/>
            <person name="Arellano A."/>
            <person name="Coleman M."/>
            <person name="Hauser L."/>
            <person name="Hess W.R."/>
            <person name="Johnson Z.I."/>
            <person name="Land M.L."/>
            <person name="Lindell D."/>
            <person name="Post A.F."/>
            <person name="Regala W."/>
            <person name="Shah M."/>
            <person name="Shaw S.L."/>
            <person name="Steglich C."/>
            <person name="Sullivan M.B."/>
            <person name="Ting C.S."/>
            <person name="Tolonen A."/>
            <person name="Webb E.A."/>
            <person name="Zinser E.R."/>
            <person name="Chisholm S.W."/>
        </authorList>
    </citation>
    <scope>NUCLEOTIDE SEQUENCE [LARGE SCALE GENOMIC DNA]</scope>
    <source>
        <strain>MIT 9313</strain>
    </source>
</reference>